<feature type="chain" id="PRO_0000174136" description="Transferrin receptor protein 2">
    <location>
        <begin position="1"/>
        <end position="801"/>
    </location>
</feature>
<feature type="topological domain" description="Cytoplasmic" evidence="1">
    <location>
        <begin position="1"/>
        <end position="83"/>
    </location>
</feature>
<feature type="transmembrane region" description="Helical; Signal-anchor for type II membrane protein" evidence="1">
    <location>
        <begin position="84"/>
        <end position="104"/>
    </location>
</feature>
<feature type="topological domain" description="Extracellular" evidence="1">
    <location>
        <begin position="105"/>
        <end position="801"/>
    </location>
</feature>
<feature type="region of interest" description="Disordered" evidence="2">
    <location>
        <begin position="16"/>
        <end position="45"/>
    </location>
</feature>
<feature type="short sequence motif" description="Endocytosis signal" evidence="1">
    <location>
        <begin position="23"/>
        <end position="26"/>
    </location>
</feature>
<feature type="compositionally biased region" description="Acidic residues" evidence="2">
    <location>
        <begin position="35"/>
        <end position="45"/>
    </location>
</feature>
<feature type="glycosylation site" description="N-linked (GlcNAc...) asparagine" evidence="1">
    <location>
        <position position="240"/>
    </location>
</feature>
<feature type="glycosylation site" description="N-linked (GlcNAc...) asparagine" evidence="7">
    <location>
        <position position="339"/>
    </location>
</feature>
<feature type="glycosylation site" description="N-linked (GlcNAc...) asparagine" evidence="1">
    <location>
        <position position="540"/>
    </location>
</feature>
<feature type="glycosylation site" description="N-linked (GlcNAc...) asparagine" evidence="7">
    <location>
        <position position="754"/>
    </location>
</feature>
<feature type="disulfide bond" description="Interchain" evidence="1">
    <location>
        <position position="108"/>
    </location>
</feature>
<feature type="disulfide bond" description="Interchain" evidence="1">
    <location>
        <position position="111"/>
    </location>
</feature>
<feature type="splice variant" id="VSP_005354" description="In isoform Beta." evidence="8">
    <location>
        <begin position="1"/>
        <end position="171"/>
    </location>
</feature>
<feature type="splice variant" id="VSP_005355" description="In isoform Gamma." evidence="9">
    <location>
        <begin position="343"/>
        <end position="369"/>
    </location>
</feature>
<feature type="sequence variant" id="VAR_042515" description="In HFE3; dbSNP:rs80338876." evidence="6">
    <original>V</original>
    <variation>I</variation>
    <location>
        <position position="22"/>
    </location>
</feature>
<feature type="sequence variant" id="VAR_012738" description="In HFE3; dbSNP:rs80338879." evidence="3">
    <original>M</original>
    <variation>K</variation>
    <location>
        <position position="172"/>
    </location>
</feature>
<feature type="sequence variant" id="VAR_034122" description="In dbSNP:rs41303465.">
    <original>D</original>
    <variation>E</variation>
    <location>
        <position position="230"/>
    </location>
</feature>
<feature type="sequence variant" id="VAR_034123" description="In dbSNP:rs34242818.">
    <original>I</original>
    <variation>M</variation>
    <location>
        <position position="238"/>
    </location>
</feature>
<feature type="sequence variant" id="VAR_042516" description="Hereditary hemochromatosis modifier; dbSNP:rs41303501." evidence="5">
    <original>R</original>
    <variation>Q</variation>
    <location>
        <position position="455"/>
    </location>
</feature>
<feature type="sequence variant" id="VAR_042517" description="In HFE3; dbSNP:rs80338889." evidence="4">
    <original>Q</original>
    <variation>P</variation>
    <location>
        <position position="690"/>
    </location>
</feature>
<feature type="sequence variant" id="VAR_034124" description="In dbSNP:rs41295942.">
    <original>R</original>
    <variation>H</variation>
    <location>
        <position position="752"/>
    </location>
</feature>
<feature type="sequence conflict" description="In Ref. 2." evidence="9" ref="2">
    <original>R</original>
    <variation>RIPLSAQV</variation>
    <location>
        <position position="712"/>
    </location>
</feature>
<dbReference type="EMBL" id="AF067864">
    <property type="protein sequence ID" value="AAD45561.1"/>
    <property type="molecule type" value="mRNA"/>
</dbReference>
<dbReference type="EMBL" id="AF053356">
    <property type="protein sequence ID" value="AAC78796.1"/>
    <property type="molecule type" value="Genomic_DNA"/>
</dbReference>
<dbReference type="EMBL" id="DQ496110">
    <property type="protein sequence ID" value="ABF47099.1"/>
    <property type="molecule type" value="Genomic_DNA"/>
</dbReference>
<dbReference type="EMBL" id="AC099394">
    <property type="status" value="NOT_ANNOTATED_CDS"/>
    <property type="molecule type" value="Genomic_DNA"/>
</dbReference>
<dbReference type="EMBL" id="BC142630">
    <property type="protein sequence ID" value="AAI42631.1"/>
    <property type="molecule type" value="mRNA"/>
</dbReference>
<dbReference type="EMBL" id="AK022002">
    <property type="protein sequence ID" value="BAB13951.1"/>
    <property type="molecule type" value="mRNA"/>
</dbReference>
<dbReference type="EMBL" id="AK000421">
    <property type="protein sequence ID" value="BAA91153.1"/>
    <property type="status" value="ALT_INIT"/>
    <property type="molecule type" value="mRNA"/>
</dbReference>
<dbReference type="CCDS" id="CCDS34707.1">
    <molecule id="Q9UP52-1"/>
</dbReference>
<dbReference type="RefSeq" id="NP_001193784.1">
    <molecule id="Q9UP52-2"/>
    <property type="nucleotide sequence ID" value="NM_001206855.3"/>
</dbReference>
<dbReference type="RefSeq" id="NP_003218.2">
    <molecule id="Q9UP52-1"/>
    <property type="nucleotide sequence ID" value="NM_003227.3"/>
</dbReference>
<dbReference type="RefSeq" id="XP_005250610.1">
    <property type="nucleotide sequence ID" value="XM_005250553.4"/>
</dbReference>
<dbReference type="RefSeq" id="XP_016868062.1">
    <property type="nucleotide sequence ID" value="XM_017012573.1"/>
</dbReference>
<dbReference type="SMR" id="Q9UP52"/>
<dbReference type="BioGRID" id="112894">
    <property type="interactions" value="42"/>
</dbReference>
<dbReference type="CORUM" id="Q9UP52"/>
<dbReference type="FunCoup" id="Q9UP52">
    <property type="interactions" value="61"/>
</dbReference>
<dbReference type="IntAct" id="Q9UP52">
    <property type="interactions" value="12"/>
</dbReference>
<dbReference type="MINT" id="Q9UP52"/>
<dbReference type="STRING" id="9606.ENSP00000420525"/>
<dbReference type="ChEMBL" id="CHEMBL3988361"/>
<dbReference type="DrugBank" id="DB15617">
    <property type="generic name" value="Ferric derisomaltose"/>
</dbReference>
<dbReference type="DrugBank" id="DB13257">
    <property type="generic name" value="Ferrous sulfate anhydrous"/>
</dbReference>
<dbReference type="MEROPS" id="M28.973"/>
<dbReference type="TCDB" id="2.B.93.1.2">
    <property type="family name" value="the trasferrin-mediated heptapeptide-decorated nanodrug (thn) family"/>
</dbReference>
<dbReference type="TCDB" id="9.B.229.1.2">
    <property type="family name" value="the transferrin receptor, cd71, (tfr) family"/>
</dbReference>
<dbReference type="GlyCosmos" id="Q9UP52">
    <property type="glycosylation" value="4 sites, No reported glycans"/>
</dbReference>
<dbReference type="GlyGen" id="Q9UP52">
    <property type="glycosylation" value="5 sites"/>
</dbReference>
<dbReference type="iPTMnet" id="Q9UP52"/>
<dbReference type="PhosphoSitePlus" id="Q9UP52"/>
<dbReference type="BioMuta" id="TFR2"/>
<dbReference type="DMDM" id="20140912"/>
<dbReference type="jPOST" id="Q9UP52"/>
<dbReference type="MassIVE" id="Q9UP52"/>
<dbReference type="PaxDb" id="9606-ENSP00000420525"/>
<dbReference type="PeptideAtlas" id="Q9UP52"/>
<dbReference type="ProteomicsDB" id="85352">
    <molecule id="Q9UP52-1"/>
</dbReference>
<dbReference type="ProteomicsDB" id="85353">
    <molecule id="Q9UP52-2"/>
</dbReference>
<dbReference type="ProteomicsDB" id="85354">
    <molecule id="Q9UP52-3"/>
</dbReference>
<dbReference type="Pumba" id="Q9UP52"/>
<dbReference type="Antibodypedia" id="2306">
    <property type="antibodies" value="214 antibodies from 29 providers"/>
</dbReference>
<dbReference type="DNASU" id="7036"/>
<dbReference type="Ensembl" id="ENST00000223051.8">
    <molecule id="Q9UP52-1"/>
    <property type="protein sequence ID" value="ENSP00000223051.3"/>
    <property type="gene ID" value="ENSG00000106327.13"/>
</dbReference>
<dbReference type="Ensembl" id="ENST00000462107.1">
    <molecule id="Q9UP52-1"/>
    <property type="protein sequence ID" value="ENSP00000420525.1"/>
    <property type="gene ID" value="ENSG00000106327.13"/>
</dbReference>
<dbReference type="GeneID" id="7036"/>
<dbReference type="KEGG" id="hsa:7036"/>
<dbReference type="MANE-Select" id="ENST00000223051.8">
    <property type="protein sequence ID" value="ENSP00000223051.3"/>
    <property type="RefSeq nucleotide sequence ID" value="NM_003227.4"/>
    <property type="RefSeq protein sequence ID" value="NP_003218.2"/>
</dbReference>
<dbReference type="UCSC" id="uc003uvv.2">
    <molecule id="Q9UP52-1"/>
    <property type="organism name" value="human"/>
</dbReference>
<dbReference type="AGR" id="HGNC:11762"/>
<dbReference type="CTD" id="7036"/>
<dbReference type="DisGeNET" id="7036"/>
<dbReference type="GeneCards" id="TFR2"/>
<dbReference type="GeneReviews" id="TFR2"/>
<dbReference type="HGNC" id="HGNC:11762">
    <property type="gene designation" value="TFR2"/>
</dbReference>
<dbReference type="HPA" id="ENSG00000106327">
    <property type="expression patterns" value="Tissue enriched (liver)"/>
</dbReference>
<dbReference type="MalaCards" id="TFR2"/>
<dbReference type="MIM" id="604250">
    <property type="type" value="phenotype"/>
</dbReference>
<dbReference type="MIM" id="604720">
    <property type="type" value="gene"/>
</dbReference>
<dbReference type="neXtProt" id="NX_Q9UP52"/>
<dbReference type="OpenTargets" id="ENSG00000106327"/>
<dbReference type="Orphanet" id="648581">
    <property type="disease" value="Digenic hemochromatosis"/>
</dbReference>
<dbReference type="Orphanet" id="225123">
    <property type="disease" value="TFR2-related hemochromatosis"/>
</dbReference>
<dbReference type="PharmGKB" id="PA36477"/>
<dbReference type="VEuPathDB" id="HostDB:ENSG00000106327"/>
<dbReference type="eggNOG" id="KOG2195">
    <property type="taxonomic scope" value="Eukaryota"/>
</dbReference>
<dbReference type="GeneTree" id="ENSGT01030000234598"/>
<dbReference type="HOGENOM" id="CLU_005688_5_0_1"/>
<dbReference type="InParanoid" id="Q9UP52"/>
<dbReference type="OMA" id="QVVFNNH"/>
<dbReference type="OrthoDB" id="5841748at2759"/>
<dbReference type="PAN-GO" id="Q9UP52">
    <property type="GO annotations" value="2 GO annotations based on evolutionary models"/>
</dbReference>
<dbReference type="PhylomeDB" id="Q9UP52"/>
<dbReference type="TreeFam" id="TF312981"/>
<dbReference type="PathwayCommons" id="Q9UP52"/>
<dbReference type="Reactome" id="R-HSA-917977">
    <property type="pathway name" value="Transferrin endocytosis and recycling"/>
</dbReference>
<dbReference type="SignaLink" id="Q9UP52"/>
<dbReference type="BioGRID-ORCS" id="7036">
    <property type="hits" value="13 hits in 1149 CRISPR screens"/>
</dbReference>
<dbReference type="GeneWiki" id="TFR2"/>
<dbReference type="GenomeRNAi" id="7036"/>
<dbReference type="Pharos" id="Q9UP52">
    <property type="development level" value="Tbio"/>
</dbReference>
<dbReference type="PRO" id="PR:Q9UP52"/>
<dbReference type="Proteomes" id="UP000005640">
    <property type="component" value="Chromosome 7"/>
</dbReference>
<dbReference type="RNAct" id="Q9UP52">
    <property type="molecule type" value="protein"/>
</dbReference>
<dbReference type="Bgee" id="ENSG00000106327">
    <property type="expression patterns" value="Expressed in right lobe of liver and 166 other cell types or tissues"/>
</dbReference>
<dbReference type="ExpressionAtlas" id="Q9UP52">
    <property type="expression patterns" value="baseline and differential"/>
</dbReference>
<dbReference type="GO" id="GO:0031410">
    <property type="term" value="C:cytoplasmic vesicle"/>
    <property type="evidence" value="ECO:0000314"/>
    <property type="project" value="BHF-UCL"/>
</dbReference>
<dbReference type="GO" id="GO:0009897">
    <property type="term" value="C:external side of plasma membrane"/>
    <property type="evidence" value="ECO:0000316"/>
    <property type="project" value="BHF-UCL"/>
</dbReference>
<dbReference type="GO" id="GO:1990712">
    <property type="term" value="C:HFE-transferrin receptor complex"/>
    <property type="evidence" value="ECO:0000314"/>
    <property type="project" value="BHF-UCL"/>
</dbReference>
<dbReference type="GO" id="GO:0005886">
    <property type="term" value="C:plasma membrane"/>
    <property type="evidence" value="ECO:0000316"/>
    <property type="project" value="BHF-UCL"/>
</dbReference>
<dbReference type="GO" id="GO:0039706">
    <property type="term" value="F:co-receptor binding"/>
    <property type="evidence" value="ECO:0000353"/>
    <property type="project" value="BHF-UCL"/>
</dbReference>
<dbReference type="GO" id="GO:0004998">
    <property type="term" value="F:transferrin receptor activity"/>
    <property type="evidence" value="ECO:0000314"/>
    <property type="project" value="BHF-UCL"/>
</dbReference>
<dbReference type="GO" id="GO:0071281">
    <property type="term" value="P:cellular response to iron ion"/>
    <property type="evidence" value="ECO:0000316"/>
    <property type="project" value="BHF-UCL"/>
</dbReference>
<dbReference type="GO" id="GO:0140298">
    <property type="term" value="P:endocytic iron import into cell"/>
    <property type="evidence" value="ECO:0000316"/>
    <property type="project" value="BHF-UCL"/>
</dbReference>
<dbReference type="GO" id="GO:0006879">
    <property type="term" value="P:intracellular iron ion homeostasis"/>
    <property type="evidence" value="ECO:0000314"/>
    <property type="project" value="BHF-UCL"/>
</dbReference>
<dbReference type="GO" id="GO:0006826">
    <property type="term" value="P:iron ion transport"/>
    <property type="evidence" value="ECO:0000303"/>
    <property type="project" value="UniProtKB"/>
</dbReference>
<dbReference type="GO" id="GO:0060586">
    <property type="term" value="P:multicellular organismal-level iron ion homeostasis"/>
    <property type="evidence" value="ECO:0000315"/>
    <property type="project" value="BHF-UCL"/>
</dbReference>
<dbReference type="GO" id="GO:0045807">
    <property type="term" value="P:positive regulation of endocytosis"/>
    <property type="evidence" value="ECO:0000316"/>
    <property type="project" value="BHF-UCL"/>
</dbReference>
<dbReference type="GO" id="GO:0090277">
    <property type="term" value="P:positive regulation of peptide hormone secretion"/>
    <property type="evidence" value="ECO:0000315"/>
    <property type="project" value="BHF-UCL"/>
</dbReference>
<dbReference type="GO" id="GO:1903319">
    <property type="term" value="P:positive regulation of protein maturation"/>
    <property type="evidence" value="ECO:0000316"/>
    <property type="project" value="BHF-UCL"/>
</dbReference>
<dbReference type="GO" id="GO:0045944">
    <property type="term" value="P:positive regulation of transcription by RNA polymerase II"/>
    <property type="evidence" value="ECO:0000316"/>
    <property type="project" value="BHF-UCL"/>
</dbReference>
<dbReference type="GO" id="GO:0006898">
    <property type="term" value="P:receptor-mediated endocytosis"/>
    <property type="evidence" value="ECO:0000316"/>
    <property type="project" value="BHF-UCL"/>
</dbReference>
<dbReference type="GO" id="GO:0010039">
    <property type="term" value="P:response to iron ion"/>
    <property type="evidence" value="ECO:0000315"/>
    <property type="project" value="BHF-UCL"/>
</dbReference>
<dbReference type="GO" id="GO:0033572">
    <property type="term" value="P:transferrin transport"/>
    <property type="evidence" value="ECO:0000314"/>
    <property type="project" value="BHF-UCL"/>
</dbReference>
<dbReference type="CDD" id="cd09848">
    <property type="entry name" value="M28_TfR"/>
    <property type="match status" value="1"/>
</dbReference>
<dbReference type="CDD" id="cd02128">
    <property type="entry name" value="PA_TfR"/>
    <property type="match status" value="1"/>
</dbReference>
<dbReference type="FunFam" id="1.20.930.40:FF:000002">
    <property type="entry name" value="Transferrin receptor protein 1"/>
    <property type="match status" value="1"/>
</dbReference>
<dbReference type="FunFam" id="3.50.30.30:FF:000010">
    <property type="entry name" value="Transferrin receptor protein 1"/>
    <property type="match status" value="1"/>
</dbReference>
<dbReference type="FunFam" id="3.40.630.10:FF:000046">
    <property type="entry name" value="transferrin receptor protein 2 isoform X1"/>
    <property type="match status" value="1"/>
</dbReference>
<dbReference type="Gene3D" id="3.50.30.30">
    <property type="match status" value="1"/>
</dbReference>
<dbReference type="Gene3D" id="1.20.930.40">
    <property type="entry name" value="Transferrin receptor-like, dimerisation domain"/>
    <property type="match status" value="1"/>
</dbReference>
<dbReference type="Gene3D" id="3.40.630.10">
    <property type="entry name" value="Zn peptidases"/>
    <property type="match status" value="1"/>
</dbReference>
<dbReference type="InterPro" id="IPR046450">
    <property type="entry name" value="PA_dom_sf"/>
</dbReference>
<dbReference type="InterPro" id="IPR003137">
    <property type="entry name" value="PA_domain"/>
</dbReference>
<dbReference type="InterPro" id="IPR007484">
    <property type="entry name" value="Peptidase_M28"/>
</dbReference>
<dbReference type="InterPro" id="IPR039373">
    <property type="entry name" value="Peptidase_M28B"/>
</dbReference>
<dbReference type="InterPro" id="IPR036757">
    <property type="entry name" value="TFR-like_dimer_dom_sf"/>
</dbReference>
<dbReference type="InterPro" id="IPR037324">
    <property type="entry name" value="TfR1/2_PA"/>
</dbReference>
<dbReference type="PANTHER" id="PTHR10404">
    <property type="entry name" value="N-ACETYLATED-ALPHA-LINKED ACIDIC DIPEPTIDASE"/>
    <property type="match status" value="1"/>
</dbReference>
<dbReference type="PANTHER" id="PTHR10404:SF33">
    <property type="entry name" value="TRANSFERRIN RECEPTOR PROTEIN 2"/>
    <property type="match status" value="1"/>
</dbReference>
<dbReference type="Pfam" id="PF02225">
    <property type="entry name" value="PA"/>
    <property type="match status" value="1"/>
</dbReference>
<dbReference type="Pfam" id="PF04389">
    <property type="entry name" value="Peptidase_M28"/>
    <property type="match status" value="1"/>
</dbReference>
<dbReference type="SUPFAM" id="SSF52025">
    <property type="entry name" value="PA domain"/>
    <property type="match status" value="1"/>
</dbReference>
<dbReference type="SUPFAM" id="SSF47672">
    <property type="entry name" value="Transferrin receptor-like dimerisation domain"/>
    <property type="match status" value="1"/>
</dbReference>
<dbReference type="SUPFAM" id="SSF53187">
    <property type="entry name" value="Zn-dependent exopeptidases"/>
    <property type="match status" value="1"/>
</dbReference>
<reference key="1">
    <citation type="journal article" date="1999" name="J. Biol. Chem.">
        <title>Molecular cloning of transferrin receptor 2: a new member of the transferrin receptor-like family.</title>
        <authorList>
            <person name="Kawabata H."/>
            <person name="Yang R."/>
            <person name="Hirama T."/>
            <person name="Vuong P.T."/>
            <person name="Kawano S."/>
            <person name="Gombart A.F."/>
            <person name="Koeffler H.P."/>
        </authorList>
    </citation>
    <scope>NUCLEOTIDE SEQUENCE [MRNA] (ISOFORMS ALPHA AND BETA)</scope>
    <source>
        <tissue>Erythroleukemia</tissue>
        <tissue>Myeloid leukemia cell</tissue>
    </source>
</reference>
<reference key="2">
    <citation type="journal article" date="1998" name="Genome Res.">
        <title>Large-scale sequencing of two regions in human chromosome 7q22: analysis of 650 kb of genomic sequence around the EPO and CUTL1 loci reveals 17 genes.</title>
        <authorList>
            <person name="Gloeckner G."/>
            <person name="Scherer S."/>
            <person name="Schattevoy R."/>
            <person name="Boright A.P."/>
            <person name="Weber J."/>
            <person name="Tsui L.-C."/>
            <person name="Rosenthal A."/>
        </authorList>
    </citation>
    <scope>NUCLEOTIDE SEQUENCE [GENOMIC DNA] (ISOFORM GAMMA)</scope>
</reference>
<reference key="3">
    <citation type="submission" date="2006-04" db="EMBL/GenBank/DDBJ databases">
        <authorList>
            <consortium name="NHLBI resequencing and genotyping service (RS&amp;G)"/>
        </authorList>
    </citation>
    <scope>NUCLEOTIDE SEQUENCE [GENOMIC DNA]</scope>
</reference>
<reference key="4">
    <citation type="journal article" date="2003" name="Nature">
        <title>The DNA sequence of human chromosome 7.</title>
        <authorList>
            <person name="Hillier L.W."/>
            <person name="Fulton R.S."/>
            <person name="Fulton L.A."/>
            <person name="Graves T.A."/>
            <person name="Pepin K.H."/>
            <person name="Wagner-McPherson C."/>
            <person name="Layman D."/>
            <person name="Maas J."/>
            <person name="Jaeger S."/>
            <person name="Walker R."/>
            <person name="Wylie K."/>
            <person name="Sekhon M."/>
            <person name="Becker M.C."/>
            <person name="O'Laughlin M.D."/>
            <person name="Schaller M.E."/>
            <person name="Fewell G.A."/>
            <person name="Delehaunty K.D."/>
            <person name="Miner T.L."/>
            <person name="Nash W.E."/>
            <person name="Cordes M."/>
            <person name="Du H."/>
            <person name="Sun H."/>
            <person name="Edwards J."/>
            <person name="Bradshaw-Cordum H."/>
            <person name="Ali J."/>
            <person name="Andrews S."/>
            <person name="Isak A."/>
            <person name="Vanbrunt A."/>
            <person name="Nguyen C."/>
            <person name="Du F."/>
            <person name="Lamar B."/>
            <person name="Courtney L."/>
            <person name="Kalicki J."/>
            <person name="Ozersky P."/>
            <person name="Bielicki L."/>
            <person name="Scott K."/>
            <person name="Holmes A."/>
            <person name="Harkins R."/>
            <person name="Harris A."/>
            <person name="Strong C.M."/>
            <person name="Hou S."/>
            <person name="Tomlinson C."/>
            <person name="Dauphin-Kohlberg S."/>
            <person name="Kozlowicz-Reilly A."/>
            <person name="Leonard S."/>
            <person name="Rohlfing T."/>
            <person name="Rock S.M."/>
            <person name="Tin-Wollam A.-M."/>
            <person name="Abbott A."/>
            <person name="Minx P."/>
            <person name="Maupin R."/>
            <person name="Strowmatt C."/>
            <person name="Latreille P."/>
            <person name="Miller N."/>
            <person name="Johnson D."/>
            <person name="Murray J."/>
            <person name="Woessner J.P."/>
            <person name="Wendl M.C."/>
            <person name="Yang S.-P."/>
            <person name="Schultz B.R."/>
            <person name="Wallis J.W."/>
            <person name="Spieth J."/>
            <person name="Bieri T.A."/>
            <person name="Nelson J.O."/>
            <person name="Berkowicz N."/>
            <person name="Wohldmann P.E."/>
            <person name="Cook L.L."/>
            <person name="Hickenbotham M.T."/>
            <person name="Eldred J."/>
            <person name="Williams D."/>
            <person name="Bedell J.A."/>
            <person name="Mardis E.R."/>
            <person name="Clifton S.W."/>
            <person name="Chissoe S.L."/>
            <person name="Marra M.A."/>
            <person name="Raymond C."/>
            <person name="Haugen E."/>
            <person name="Gillett W."/>
            <person name="Zhou Y."/>
            <person name="James R."/>
            <person name="Phelps K."/>
            <person name="Iadanoto S."/>
            <person name="Bubb K."/>
            <person name="Simms E."/>
            <person name="Levy R."/>
            <person name="Clendenning J."/>
            <person name="Kaul R."/>
            <person name="Kent W.J."/>
            <person name="Furey T.S."/>
            <person name="Baertsch R.A."/>
            <person name="Brent M.R."/>
            <person name="Keibler E."/>
            <person name="Flicek P."/>
            <person name="Bork P."/>
            <person name="Suyama M."/>
            <person name="Bailey J.A."/>
            <person name="Portnoy M.E."/>
            <person name="Torrents D."/>
            <person name="Chinwalla A.T."/>
            <person name="Gish W.R."/>
            <person name="Eddy S.R."/>
            <person name="McPherson J.D."/>
            <person name="Olson M.V."/>
            <person name="Eichler E.E."/>
            <person name="Green E.D."/>
            <person name="Waterston R.H."/>
            <person name="Wilson R.K."/>
        </authorList>
    </citation>
    <scope>NUCLEOTIDE SEQUENCE [LARGE SCALE GENOMIC DNA]</scope>
</reference>
<reference key="5">
    <citation type="journal article" date="2004" name="Genome Res.">
        <title>The status, quality, and expansion of the NIH full-length cDNA project: the Mammalian Gene Collection (MGC).</title>
        <authorList>
            <consortium name="The MGC Project Team"/>
        </authorList>
    </citation>
    <scope>NUCLEOTIDE SEQUENCE [LARGE SCALE MRNA]</scope>
</reference>
<reference key="6">
    <citation type="journal article" date="2004" name="Nat. Genet.">
        <title>Complete sequencing and characterization of 21,243 full-length human cDNAs.</title>
        <authorList>
            <person name="Ota T."/>
            <person name="Suzuki Y."/>
            <person name="Nishikawa T."/>
            <person name="Otsuki T."/>
            <person name="Sugiyama T."/>
            <person name="Irie R."/>
            <person name="Wakamatsu A."/>
            <person name="Hayashi K."/>
            <person name="Sato H."/>
            <person name="Nagai K."/>
            <person name="Kimura K."/>
            <person name="Makita H."/>
            <person name="Sekine M."/>
            <person name="Obayashi M."/>
            <person name="Nishi T."/>
            <person name="Shibahara T."/>
            <person name="Tanaka T."/>
            <person name="Ishii S."/>
            <person name="Yamamoto J."/>
            <person name="Saito K."/>
            <person name="Kawai Y."/>
            <person name="Isono Y."/>
            <person name="Nakamura Y."/>
            <person name="Nagahari K."/>
            <person name="Murakami K."/>
            <person name="Yasuda T."/>
            <person name="Iwayanagi T."/>
            <person name="Wagatsuma M."/>
            <person name="Shiratori A."/>
            <person name="Sudo H."/>
            <person name="Hosoiri T."/>
            <person name="Kaku Y."/>
            <person name="Kodaira H."/>
            <person name="Kondo H."/>
            <person name="Sugawara M."/>
            <person name="Takahashi M."/>
            <person name="Kanda K."/>
            <person name="Yokoi T."/>
            <person name="Furuya T."/>
            <person name="Kikkawa E."/>
            <person name="Omura Y."/>
            <person name="Abe K."/>
            <person name="Kamihara K."/>
            <person name="Katsuta N."/>
            <person name="Sato K."/>
            <person name="Tanikawa M."/>
            <person name="Yamazaki M."/>
            <person name="Ninomiya K."/>
            <person name="Ishibashi T."/>
            <person name="Yamashita H."/>
            <person name="Murakawa K."/>
            <person name="Fujimori K."/>
            <person name="Tanai H."/>
            <person name="Kimata M."/>
            <person name="Watanabe M."/>
            <person name="Hiraoka S."/>
            <person name="Chiba Y."/>
            <person name="Ishida S."/>
            <person name="Ono Y."/>
            <person name="Takiguchi S."/>
            <person name="Watanabe S."/>
            <person name="Yosida M."/>
            <person name="Hotuta T."/>
            <person name="Kusano J."/>
            <person name="Kanehori K."/>
            <person name="Takahashi-Fujii A."/>
            <person name="Hara H."/>
            <person name="Tanase T.-O."/>
            <person name="Nomura Y."/>
            <person name="Togiya S."/>
            <person name="Komai F."/>
            <person name="Hara R."/>
            <person name="Takeuchi K."/>
            <person name="Arita M."/>
            <person name="Imose N."/>
            <person name="Musashino K."/>
            <person name="Yuuki H."/>
            <person name="Oshima A."/>
            <person name="Sasaki N."/>
            <person name="Aotsuka S."/>
            <person name="Yoshikawa Y."/>
            <person name="Matsunawa H."/>
            <person name="Ichihara T."/>
            <person name="Shiohata N."/>
            <person name="Sano S."/>
            <person name="Moriya S."/>
            <person name="Momiyama H."/>
            <person name="Satoh N."/>
            <person name="Takami S."/>
            <person name="Terashima Y."/>
            <person name="Suzuki O."/>
            <person name="Nakagawa S."/>
            <person name="Senoh A."/>
            <person name="Mizoguchi H."/>
            <person name="Goto Y."/>
            <person name="Shimizu F."/>
            <person name="Wakebe H."/>
            <person name="Hishigaki H."/>
            <person name="Watanabe T."/>
            <person name="Sugiyama A."/>
            <person name="Takemoto M."/>
            <person name="Kawakami B."/>
            <person name="Yamazaki M."/>
            <person name="Watanabe K."/>
            <person name="Kumagai A."/>
            <person name="Itakura S."/>
            <person name="Fukuzumi Y."/>
            <person name="Fujimori Y."/>
            <person name="Komiyama M."/>
            <person name="Tashiro H."/>
            <person name="Tanigami A."/>
            <person name="Fujiwara T."/>
            <person name="Ono T."/>
            <person name="Yamada K."/>
            <person name="Fujii Y."/>
            <person name="Ozaki K."/>
            <person name="Hirao M."/>
            <person name="Ohmori Y."/>
            <person name="Kawabata A."/>
            <person name="Hikiji T."/>
            <person name="Kobatake N."/>
            <person name="Inagaki H."/>
            <person name="Ikema Y."/>
            <person name="Okamoto S."/>
            <person name="Okitani R."/>
            <person name="Kawakami T."/>
            <person name="Noguchi S."/>
            <person name="Itoh T."/>
            <person name="Shigeta K."/>
            <person name="Senba T."/>
            <person name="Matsumura K."/>
            <person name="Nakajima Y."/>
            <person name="Mizuno T."/>
            <person name="Morinaga M."/>
            <person name="Sasaki M."/>
            <person name="Togashi T."/>
            <person name="Oyama M."/>
            <person name="Hata H."/>
            <person name="Watanabe M."/>
            <person name="Komatsu T."/>
            <person name="Mizushima-Sugano J."/>
            <person name="Satoh T."/>
            <person name="Shirai Y."/>
            <person name="Takahashi Y."/>
            <person name="Nakagawa K."/>
            <person name="Okumura K."/>
            <person name="Nagase T."/>
            <person name="Nomura N."/>
            <person name="Kikuchi H."/>
            <person name="Masuho Y."/>
            <person name="Yamashita R."/>
            <person name="Nakai K."/>
            <person name="Yada T."/>
            <person name="Nakamura Y."/>
            <person name="Ohara O."/>
            <person name="Isogai T."/>
            <person name="Sugano S."/>
        </authorList>
    </citation>
    <scope>NUCLEOTIDE SEQUENCE [LARGE SCALE MRNA] OF 1-158 AND 370-801</scope>
    <source>
        <tissue>Carcinoma</tissue>
        <tissue>Embryo</tissue>
    </source>
</reference>
<reference key="7">
    <citation type="journal article" date="2000" name="Nat. Genet.">
        <title>The gene TFR2 is mutated in a new type of haemochromatosis mapping to 7q22.</title>
        <authorList>
            <person name="Camaschella C."/>
            <person name="Roetto A."/>
            <person name="Cali A."/>
            <person name="De Gobbi M."/>
            <person name="Garozzo G."/>
            <person name="Carella M."/>
            <person name="Majorano N."/>
            <person name="Totaro A."/>
            <person name="Gasparini P."/>
        </authorList>
    </citation>
    <scope>DISEASE</scope>
</reference>
<reference key="8">
    <citation type="journal article" date="2009" name="J. Proteome Res.">
        <title>Glycoproteomics analysis of human liver tissue by combination of multiple enzyme digestion and hydrazide chemistry.</title>
        <authorList>
            <person name="Chen R."/>
            <person name="Jiang X."/>
            <person name="Sun D."/>
            <person name="Han G."/>
            <person name="Wang F."/>
            <person name="Ye M."/>
            <person name="Wang L."/>
            <person name="Zou H."/>
        </authorList>
    </citation>
    <scope>GLYCOSYLATION [LARGE SCALE ANALYSIS] AT ASN-339 AND ASN-754</scope>
    <source>
        <tissue>Liver</tissue>
    </source>
</reference>
<reference key="9">
    <citation type="journal article" date="2014" name="J. Proteomics">
        <title>An enzyme assisted RP-RPLC approach for in-depth analysis of human liver phosphoproteome.</title>
        <authorList>
            <person name="Bian Y."/>
            <person name="Song C."/>
            <person name="Cheng K."/>
            <person name="Dong M."/>
            <person name="Wang F."/>
            <person name="Huang J."/>
            <person name="Sun D."/>
            <person name="Wang L."/>
            <person name="Ye M."/>
            <person name="Zou H."/>
        </authorList>
    </citation>
    <scope>IDENTIFICATION BY MASS SPECTROMETRY [LARGE SCALE ANALYSIS]</scope>
    <source>
        <tissue>Liver</tissue>
    </source>
</reference>
<reference key="10">
    <citation type="journal article" date="2001" name="Blood">
        <title>New mutations inactivating transferrin 2 in hemochromatosis type 3.</title>
        <authorList>
            <person name="Roetto A."/>
            <person name="Totaro A."/>
            <person name="Piperno A."/>
            <person name="Piga A."/>
            <person name="Longo F."/>
            <person name="Garozzo G."/>
            <person name="Cali A."/>
            <person name="De Gobbi M."/>
            <person name="Gasparini P."/>
            <person name="Camaschella C."/>
        </authorList>
    </citation>
    <scope>VARIANT HFE3 LYS-172</scope>
</reference>
<reference key="11">
    <citation type="journal article" date="2002" name="Blood">
        <title>Transferrin receptor 2 (TfR2) and HFE mutational analysis in non-C282Y iron overload: identification of a novel TfR2 mutation.</title>
        <authorList>
            <person name="Mattman A."/>
            <person name="Huntsman D."/>
            <person name="Lockitch G."/>
            <person name="Langlois S."/>
            <person name="Buskard N."/>
            <person name="Ralston D."/>
            <person name="Butterfield Y."/>
            <person name="Rodrigues P."/>
            <person name="Jones S."/>
            <person name="Porto G."/>
            <person name="Marra M."/>
            <person name="De Sousa M."/>
            <person name="Vatcher G."/>
        </authorList>
    </citation>
    <scope>VARIANT HFE3 PRO-690</scope>
</reference>
<reference key="12">
    <citation type="journal article" date="2002" name="Blood">
        <title>Mutation analysis of transferrin-receptor 2 in patients with atypical hemochromatosis.</title>
        <authorList>
            <person name="Hofmann W.-K."/>
            <person name="Tong X.-J."/>
            <person name="Ajioka R.S."/>
            <person name="Kushner J.P."/>
            <person name="Koeffler H.P."/>
        </authorList>
    </citation>
    <scope>VARIANT GLN-455</scope>
</reference>
<reference key="13">
    <citation type="journal article" date="2003" name="Clin. Chem.">
        <title>Identification of new mutations of the HFE, hepcidin, and transferrin receptor 2 genes by denaturing HPLC analysis of individuals with biochemical indications of iron overload.</title>
        <authorList>
            <person name="Biasiotto G."/>
            <person name="Belloli S."/>
            <person name="Ruggeri G."/>
            <person name="Zanella I."/>
            <person name="Gerardi G."/>
            <person name="Corrado M."/>
            <person name="Gobbi E."/>
            <person name="Albertini A."/>
            <person name="Arosio P."/>
        </authorList>
    </citation>
    <scope>VARIANT HFE3 ILE-22</scope>
</reference>
<accession>Q9UP52</accession>
<accession>A6NGM7</accession>
<accession>O75422</accession>
<accession>Q1HE13</accession>
<accession>Q9HA99</accession>
<accession>Q9NX67</accession>
<comment type="function">
    <text>Mediates cellular uptake of transferrin-bound iron in a non-iron dependent manner. May be involved in iron metabolism, hepatocyte function and erythrocyte differentiation.</text>
</comment>
<comment type="subunit">
    <text>Homodimer.</text>
</comment>
<comment type="interaction">
    <interactant intactId="EBI-3934135">
        <id>Q9UP52</id>
    </interactant>
    <interactant intactId="EBI-2804156">
        <id>Q6UX06</id>
        <label>OLFM4</label>
    </interactant>
    <organismsDiffer>false</organismsDiffer>
    <experiments>3</experiments>
</comment>
<comment type="interaction">
    <interactant intactId="EBI-3934135">
        <id>Q9UP52</id>
    </interactant>
    <interactant intactId="EBI-8652744">
        <id>Q96IW7</id>
        <label>SEC22A</label>
    </interactant>
    <organismsDiffer>false</organismsDiffer>
    <experiments>3</experiments>
</comment>
<comment type="subcellular location">
    <subcellularLocation>
        <location>Cell membrane</location>
        <topology>Single-pass type II membrane protein</topology>
    </subcellularLocation>
</comment>
<comment type="subcellular location">
    <molecule>Isoform Beta</molecule>
    <subcellularLocation>
        <location evidence="9">Cytoplasm</location>
    </subcellularLocation>
    <text>Lacks the transmembrane domain. Probably intracellular.</text>
</comment>
<comment type="alternative products">
    <event type="alternative splicing"/>
    <isoform>
        <id>Q9UP52-1</id>
        <name>Alpha</name>
        <sequence type="displayed"/>
    </isoform>
    <isoform>
        <id>Q9UP52-2</id>
        <name>Beta</name>
        <sequence type="described" ref="VSP_005354"/>
    </isoform>
    <isoform>
        <id>Q9UP52-3</id>
        <name>Gamma</name>
        <sequence type="described" ref="VSP_005355"/>
    </isoform>
</comment>
<comment type="tissue specificity">
    <text>Predominantly expressed in liver. While the alpha form is also expressed in spleen, lung, muscle, prostate and peripheral blood mononuclear cells, the beta form is expressed in all tissues tested, albeit weakly.</text>
</comment>
<comment type="disease" evidence="3 4 6">
    <disease id="DI-01715">
        <name>Hemochromatosis 3</name>
        <acronym>HFE3</acronym>
        <description>A disorder of iron metabolism characterized by iron overload. Excess iron is deposited in a variety of organs leading to their failure, and resulting in serious illnesses including cirrhosis, hepatomas, diabetes, cardiomyopathy, arthritis, and hypogonadotropic hypogonadism. Severe effects of the disease usually do not appear until after decades of progressive iron loading.</description>
        <dbReference type="MIM" id="604250"/>
    </disease>
    <text>The disease is caused by variants affecting the gene represented in this entry.</text>
</comment>
<comment type="miscellaneous">
    <text>The variant Lys-172 found in hereditary hemochromatosis type III affects the putative initiation codon of the beta isoform thus preventing its translation.</text>
</comment>
<comment type="similarity">
    <text evidence="9">Belongs to the peptidase M28 family. M28B subfamily.</text>
</comment>
<comment type="sequence caution" evidence="9">
    <conflict type="erroneous initiation">
        <sequence resource="EMBL-CDS" id="BAA91153"/>
    </conflict>
</comment>
<organism>
    <name type="scientific">Homo sapiens</name>
    <name type="common">Human</name>
    <dbReference type="NCBI Taxonomy" id="9606"/>
    <lineage>
        <taxon>Eukaryota</taxon>
        <taxon>Metazoa</taxon>
        <taxon>Chordata</taxon>
        <taxon>Craniata</taxon>
        <taxon>Vertebrata</taxon>
        <taxon>Euteleostomi</taxon>
        <taxon>Mammalia</taxon>
        <taxon>Eutheria</taxon>
        <taxon>Euarchontoglires</taxon>
        <taxon>Primates</taxon>
        <taxon>Haplorrhini</taxon>
        <taxon>Catarrhini</taxon>
        <taxon>Hominidae</taxon>
        <taxon>Homo</taxon>
    </lineage>
</organism>
<keyword id="KW-0025">Alternative splicing</keyword>
<keyword id="KW-1003">Cell membrane</keyword>
<keyword id="KW-0963">Cytoplasm</keyword>
<keyword id="KW-0225">Disease variant</keyword>
<keyword id="KW-1015">Disulfide bond</keyword>
<keyword id="KW-0325">Glycoprotein</keyword>
<keyword id="KW-0472">Membrane</keyword>
<keyword id="KW-1267">Proteomics identification</keyword>
<keyword id="KW-0675">Receptor</keyword>
<keyword id="KW-1185">Reference proteome</keyword>
<keyword id="KW-0735">Signal-anchor</keyword>
<keyword id="KW-0812">Transmembrane</keyword>
<keyword id="KW-1133">Transmembrane helix</keyword>
<protein>
    <recommendedName>
        <fullName>Transferrin receptor protein 2</fullName>
        <shortName>TfR2</shortName>
    </recommendedName>
</protein>
<sequence length="801" mass="88755">MERLWGLFQRAQQLSPRSSQTVYQRVEGPRKGHLEEEEEDGEEGAETLAHFCPMELRGPEPLGSRPRQPNLIPWAAAGRRAAPYLVLTALLIFTGAFLLGYVAFRGSCQACGDSVLVVSEDVNYEPDLDFHQGRLYWSDLQAMFLQFLGEGRLEDTIRQTSLRERVAGSAGMAALTQDIRAALSRQKLDHVWTDTHYVGLQFPDPAHPNTLHWVDEAGKVGEQLPLEDPDVYCPYSAIGNVTGELVYAHYGRPEDLQDLRARGVDPVGRLLLVRVGVISFAQKVTNAQDFGAQGVLIYPEPADFSQDPPKPSLSSQQAVYGHVHLGTGDPYTPGFPSFNQTQFPPVASSGLPSIPAQPISADIASRLLRKLKGPVAPQEWQGSLLGSPYHLGPGPRLRLVVNNHRTSTPINNIFGCIEGRSEPDHYVVIGAQRDAWGPGAAKSAVGTAILLELVRTFSSMVSNGFRPRRSLLFISWDGGDFGSVGSTEWLEGYLSVLHLKAVVYVSLDNAVLGDDKFHAKTSPLLTSLIESVLKQVDSPNHSGQTLYEQVVFTNPSWDAEVIRPLPMDSSAYSFTAFVGVPAVEFSFMEDDQAYPFLHTKEDTYENLHKVLQGRLPAVAQAVAQLAGQLLIRLSHDRLLPLDFGRYGDVVLRHIGNLNEFSGDLKARGLTLQWVYSARGDYIRAAEKLRQEIYSSEERDERLTRMYNVRIMRVEFYFLSQYVSPADSPFRHIFMGRGDHTLGALLDHLRLLRSNSSGTPGATSSTGFQESRFRRQLALLTWTLQGAANALSGDVWNIDNNF</sequence>
<name>TFR2_HUMAN</name>
<evidence type="ECO:0000255" key="1"/>
<evidence type="ECO:0000256" key="2">
    <source>
        <dbReference type="SAM" id="MobiDB-lite"/>
    </source>
</evidence>
<evidence type="ECO:0000269" key="3">
    <source>
    </source>
</evidence>
<evidence type="ECO:0000269" key="4">
    <source>
    </source>
</evidence>
<evidence type="ECO:0000269" key="5">
    <source>
    </source>
</evidence>
<evidence type="ECO:0000269" key="6">
    <source>
    </source>
</evidence>
<evidence type="ECO:0000269" key="7">
    <source>
    </source>
</evidence>
<evidence type="ECO:0000303" key="8">
    <source>
    </source>
</evidence>
<evidence type="ECO:0000305" key="9"/>
<proteinExistence type="evidence at protein level"/>
<gene>
    <name type="primary">TFR2</name>
</gene>